<comment type="function">
    <text evidence="1">Responsible for the release of ribosomes from messenger RNA at the termination of protein biosynthesis. May increase the efficiency of translation by recycling ribosomes from one round of translation to another.</text>
</comment>
<comment type="subcellular location">
    <subcellularLocation>
        <location evidence="1">Cytoplasm</location>
    </subcellularLocation>
</comment>
<comment type="similarity">
    <text evidence="1">Belongs to the RRF family.</text>
</comment>
<reference key="1">
    <citation type="submission" date="2006-12" db="EMBL/GenBank/DDBJ databases">
        <title>Complete sequence of Halorhodospira halophila SL1.</title>
        <authorList>
            <consortium name="US DOE Joint Genome Institute"/>
            <person name="Copeland A."/>
            <person name="Lucas S."/>
            <person name="Lapidus A."/>
            <person name="Barry K."/>
            <person name="Detter J.C."/>
            <person name="Glavina del Rio T."/>
            <person name="Hammon N."/>
            <person name="Israni S."/>
            <person name="Dalin E."/>
            <person name="Tice H."/>
            <person name="Pitluck S."/>
            <person name="Saunders E."/>
            <person name="Brettin T."/>
            <person name="Bruce D."/>
            <person name="Han C."/>
            <person name="Tapia R."/>
            <person name="Schmutz J."/>
            <person name="Larimer F."/>
            <person name="Land M."/>
            <person name="Hauser L."/>
            <person name="Kyrpides N."/>
            <person name="Mikhailova N."/>
            <person name="Hoff W."/>
            <person name="Richardson P."/>
        </authorList>
    </citation>
    <scope>NUCLEOTIDE SEQUENCE [LARGE SCALE GENOMIC DNA]</scope>
    <source>
        <strain>DSM 244 / SL1</strain>
    </source>
</reference>
<organism>
    <name type="scientific">Halorhodospira halophila (strain DSM 244 / SL1)</name>
    <name type="common">Ectothiorhodospira halophila (strain DSM 244 / SL1)</name>
    <dbReference type="NCBI Taxonomy" id="349124"/>
    <lineage>
        <taxon>Bacteria</taxon>
        <taxon>Pseudomonadati</taxon>
        <taxon>Pseudomonadota</taxon>
        <taxon>Gammaproteobacteria</taxon>
        <taxon>Chromatiales</taxon>
        <taxon>Ectothiorhodospiraceae</taxon>
        <taxon>Halorhodospira</taxon>
    </lineage>
</organism>
<proteinExistence type="inferred from homology"/>
<name>RRF_HALHL</name>
<dbReference type="EMBL" id="CP000544">
    <property type="protein sequence ID" value="ABM62230.1"/>
    <property type="molecule type" value="Genomic_DNA"/>
</dbReference>
<dbReference type="RefSeq" id="WP_011814252.1">
    <property type="nucleotide sequence ID" value="NC_008789.1"/>
</dbReference>
<dbReference type="SMR" id="A1WX18"/>
<dbReference type="STRING" id="349124.Hhal_1463"/>
<dbReference type="KEGG" id="hha:Hhal_1463"/>
<dbReference type="eggNOG" id="COG0233">
    <property type="taxonomic scope" value="Bacteria"/>
</dbReference>
<dbReference type="HOGENOM" id="CLU_073981_2_0_6"/>
<dbReference type="OrthoDB" id="9804006at2"/>
<dbReference type="Proteomes" id="UP000000647">
    <property type="component" value="Chromosome"/>
</dbReference>
<dbReference type="GO" id="GO:0005829">
    <property type="term" value="C:cytosol"/>
    <property type="evidence" value="ECO:0007669"/>
    <property type="project" value="GOC"/>
</dbReference>
<dbReference type="GO" id="GO:0043023">
    <property type="term" value="F:ribosomal large subunit binding"/>
    <property type="evidence" value="ECO:0007669"/>
    <property type="project" value="TreeGrafter"/>
</dbReference>
<dbReference type="GO" id="GO:0002184">
    <property type="term" value="P:cytoplasmic translational termination"/>
    <property type="evidence" value="ECO:0007669"/>
    <property type="project" value="TreeGrafter"/>
</dbReference>
<dbReference type="CDD" id="cd00520">
    <property type="entry name" value="RRF"/>
    <property type="match status" value="1"/>
</dbReference>
<dbReference type="FunFam" id="1.10.132.20:FF:000001">
    <property type="entry name" value="Ribosome-recycling factor"/>
    <property type="match status" value="1"/>
</dbReference>
<dbReference type="FunFam" id="3.30.1360.40:FF:000001">
    <property type="entry name" value="Ribosome-recycling factor"/>
    <property type="match status" value="1"/>
</dbReference>
<dbReference type="Gene3D" id="3.30.1360.40">
    <property type="match status" value="1"/>
</dbReference>
<dbReference type="Gene3D" id="1.10.132.20">
    <property type="entry name" value="Ribosome-recycling factor"/>
    <property type="match status" value="1"/>
</dbReference>
<dbReference type="HAMAP" id="MF_00040">
    <property type="entry name" value="RRF"/>
    <property type="match status" value="1"/>
</dbReference>
<dbReference type="InterPro" id="IPR002661">
    <property type="entry name" value="Ribosome_recyc_fac"/>
</dbReference>
<dbReference type="InterPro" id="IPR023584">
    <property type="entry name" value="Ribosome_recyc_fac_dom"/>
</dbReference>
<dbReference type="InterPro" id="IPR036191">
    <property type="entry name" value="RRF_sf"/>
</dbReference>
<dbReference type="NCBIfam" id="TIGR00496">
    <property type="entry name" value="frr"/>
    <property type="match status" value="1"/>
</dbReference>
<dbReference type="PANTHER" id="PTHR20982:SF3">
    <property type="entry name" value="MITOCHONDRIAL RIBOSOME RECYCLING FACTOR PSEUDO 1"/>
    <property type="match status" value="1"/>
</dbReference>
<dbReference type="PANTHER" id="PTHR20982">
    <property type="entry name" value="RIBOSOME RECYCLING FACTOR"/>
    <property type="match status" value="1"/>
</dbReference>
<dbReference type="Pfam" id="PF01765">
    <property type="entry name" value="RRF"/>
    <property type="match status" value="1"/>
</dbReference>
<dbReference type="SUPFAM" id="SSF55194">
    <property type="entry name" value="Ribosome recycling factor, RRF"/>
    <property type="match status" value="1"/>
</dbReference>
<accession>A1WX18</accession>
<evidence type="ECO:0000255" key="1">
    <source>
        <dbReference type="HAMAP-Rule" id="MF_00040"/>
    </source>
</evidence>
<sequence>MIEDIQEDADRRMAKAVESLKHDLARLRTGRAHTSLLDQVNVEYYGMEVPIKQAANVSVEDSRTLAVTPFEKHMVPAIEKAIMASNLGLSPVSAGQVIRVPLPSLTEDRRKEMVRLVKNEAEQARVAIRNVRRDANSDLKDLAKGKDITEDEERRAQEAIQKLTDRYVAQVDDLLEEKERELMEV</sequence>
<feature type="chain" id="PRO_1000003176" description="Ribosome-recycling factor">
    <location>
        <begin position="1"/>
        <end position="185"/>
    </location>
</feature>
<keyword id="KW-0963">Cytoplasm</keyword>
<keyword id="KW-0648">Protein biosynthesis</keyword>
<keyword id="KW-1185">Reference proteome</keyword>
<protein>
    <recommendedName>
        <fullName evidence="1">Ribosome-recycling factor</fullName>
        <shortName evidence="1">RRF</shortName>
    </recommendedName>
    <alternativeName>
        <fullName evidence="1">Ribosome-releasing factor</fullName>
    </alternativeName>
</protein>
<gene>
    <name evidence="1" type="primary">frr</name>
    <name type="ordered locus">Hhal_1463</name>
</gene>